<feature type="chain" id="PRO_0000048587" description="Mating-type P-specific polypeptide Pc">
    <location>
        <begin position="1"/>
        <end position="118"/>
    </location>
</feature>
<feature type="DNA-binding region" description="HMG box">
    <location>
        <begin position="29"/>
        <end position="97"/>
    </location>
</feature>
<name>MATPC_SCHPM</name>
<gene>
    <name type="primary">mat2-Pc</name>
    <name type="synonym">matPc</name>
    <name type="ORF">SPMTR.01</name>
</gene>
<accession>P10841</accession>
<accession>C7U328</accession>
<comment type="function">
    <text evidence="1">Mating type proteins are sequence specific DNA-binding proteins that act as master switches in yeast differentiation by controlling gene expression in a cell type-specific fashion. Required for conjugation and efficient meiosis.</text>
</comment>
<comment type="subcellular location">
    <subcellularLocation>
        <location evidence="2">Nucleus</location>
    </subcellularLocation>
</comment>
<comment type="induction">
    <text evidence="1">By nitrogen starvation.</text>
</comment>
<comment type="miscellaneous">
    <text>There are three genetic loci for mating type genes in S.pombe, mat1, mat2-P and mat3-M. Cell type is determined by the alternate allele present in mat1, either P (plus) in a h+ or M (minus) in a h- cell. Mat2-P and mat3-M serve as donor of information that is transposed to mat1 during a switch of mating type.</text>
</comment>
<sequence length="118" mass="13832">MDPRLRAPIFLPILTPETLQKKKQIKGNKTTIYKNGFMLFRSRLHKILNLSGDWAGASAKCSIIWHTLPQNVRLAWSQLAELSHYQDVRRQIAKLERILYSKRLNGHNNYKLHISRVQ</sequence>
<evidence type="ECO:0000269" key="1">
    <source>
    </source>
</evidence>
<evidence type="ECO:0000305" key="2"/>
<proteinExistence type="evidence at transcript level"/>
<protein>
    <recommendedName>
        <fullName>Mating-type P-specific polypeptide Pc</fullName>
    </recommendedName>
</protein>
<organism>
    <name type="scientific">Schizosaccharomyces pombe</name>
    <name type="common">Fission yeast</name>
    <dbReference type="NCBI Taxonomy" id="4896"/>
    <lineage>
        <taxon>Eukaryota</taxon>
        <taxon>Fungi</taxon>
        <taxon>Dikarya</taxon>
        <taxon>Ascomycota</taxon>
        <taxon>Taphrinomycotina</taxon>
        <taxon>Schizosaccharomycetes</taxon>
        <taxon>Schizosaccharomycetales</taxon>
        <taxon>Schizosaccharomycetaceae</taxon>
        <taxon>Schizosaccharomyces</taxon>
    </lineage>
</organism>
<keyword id="KW-0238">DNA-binding</keyword>
<keyword id="KW-0539">Nucleus</keyword>
<keyword id="KW-0346">Stress response</keyword>
<keyword id="KW-0804">Transcription</keyword>
<keyword id="KW-0805">Transcription regulation</keyword>
<dbReference type="EMBL" id="X07643">
    <property type="protein sequence ID" value="CAA30482.1"/>
    <property type="molecule type" value="Genomic_DNA"/>
</dbReference>
<dbReference type="EMBL" id="FP565355">
    <property type="protein sequence ID" value="CBB12354.1"/>
    <property type="molecule type" value="Genomic_DNA"/>
</dbReference>
<dbReference type="PIR" id="S00572">
    <property type="entry name" value="S00572"/>
</dbReference>
<dbReference type="EnsemblFungi" id="SPMTR.01.1">
    <property type="protein sequence ID" value="SPMTR.01.1:pep"/>
    <property type="gene ID" value="SPMTR.01"/>
</dbReference>
<dbReference type="PomBase" id="SPMTR.01">
    <property type="gene designation" value="mat2-Pc"/>
</dbReference>
<dbReference type="VEuPathDB" id="FungiDB:SPMTR.01"/>
<dbReference type="HOGENOM" id="CLU_168459_0_0_1"/>
<dbReference type="OMA" id="ELSHYQD"/>
<dbReference type="GO" id="GO:0005634">
    <property type="term" value="C:nucleus"/>
    <property type="evidence" value="ECO:0007669"/>
    <property type="project" value="UniProtKB-SubCell"/>
</dbReference>
<dbReference type="GO" id="GO:0003677">
    <property type="term" value="F:DNA binding"/>
    <property type="evidence" value="ECO:0007669"/>
    <property type="project" value="UniProtKB-KW"/>
</dbReference>
<dbReference type="GO" id="GO:0003713">
    <property type="term" value="F:transcription coactivator activity"/>
    <property type="evidence" value="ECO:0000353"/>
    <property type="project" value="PomBase"/>
</dbReference>
<dbReference type="GO" id="GO:0010514">
    <property type="term" value="P:induction of conjugation with cellular fusion"/>
    <property type="evidence" value="ECO:0000315"/>
    <property type="project" value="PomBase"/>
</dbReference>
<dbReference type="GO" id="GO:0007531">
    <property type="term" value="P:mating type determination"/>
    <property type="evidence" value="ECO:0000303"/>
    <property type="project" value="PomBase"/>
</dbReference>
<dbReference type="GO" id="GO:1900237">
    <property type="term" value="P:positive regulation of induction of conjugation with cellular fusion"/>
    <property type="evidence" value="ECO:0000315"/>
    <property type="project" value="PomBase"/>
</dbReference>
<dbReference type="GO" id="GO:0051446">
    <property type="term" value="P:positive regulation of meiotic cell cycle"/>
    <property type="evidence" value="ECO:0000315"/>
    <property type="project" value="PomBase"/>
</dbReference>
<dbReference type="GO" id="GO:0045944">
    <property type="term" value="P:positive regulation of transcription by RNA polymerase II"/>
    <property type="evidence" value="ECO:0000315"/>
    <property type="project" value="PomBase"/>
</dbReference>
<dbReference type="InterPro" id="IPR009071">
    <property type="entry name" value="HMG_box_dom"/>
</dbReference>
<dbReference type="InterPro" id="IPR036910">
    <property type="entry name" value="HMG_box_dom_sf"/>
</dbReference>
<dbReference type="SMART" id="SM00398">
    <property type="entry name" value="HMG"/>
    <property type="match status" value="1"/>
</dbReference>
<dbReference type="SUPFAM" id="SSF47095">
    <property type="entry name" value="HMG-box"/>
    <property type="match status" value="1"/>
</dbReference>
<reference key="1">
    <citation type="journal article" date="1988" name="EMBO J.">
        <title>Four mating-type genes control sexual differentiation in the fission yeast.</title>
        <authorList>
            <person name="Kelly M."/>
            <person name="Burke J."/>
            <person name="Smith M."/>
            <person name="Klar A."/>
            <person name="Beach D."/>
        </authorList>
    </citation>
    <scope>NUCLEOTIDE SEQUENCE [GENOMIC DNA]</scope>
    <scope>FUNCTION</scope>
    <scope>INDUCTION</scope>
    <source>
        <strain>h90</strain>
    </source>
</reference>
<reference key="2">
    <citation type="submission" date="2009-08" db="EMBL/GenBank/DDBJ databases">
        <authorList>
            <consortium name="The Schizosaccharomyces pombe Genome Sequencing Consortium"/>
            <person name="Wood V."/>
        </authorList>
    </citation>
    <scope>NUCLEOTIDE SEQUENCE [GENOMIC DNA]</scope>
    <source>
        <strain>h90</strain>
    </source>
</reference>